<sequence>MKGKAGGKAADAAEKVAASNRRARFDYDIEDTWEAGLVLTGSEVKSLREGNVNLSDAYAMPRGEELWLLNCRIGEYKQAAHFGHAPLRDRKLLMNRAEIDRVRGKVEQRGYTLVPLRIYFKQGWAKVELGLARGRSHEDRRGAIAERESKREMDRALARGRRR</sequence>
<proteinExistence type="inferred from homology"/>
<protein>
    <recommendedName>
        <fullName evidence="1">SsrA-binding protein</fullName>
    </recommendedName>
    <alternativeName>
        <fullName evidence="1">Small protein B</fullName>
    </alternativeName>
</protein>
<feature type="chain" id="PRO_0000331021" description="SsrA-binding protein">
    <location>
        <begin position="1"/>
        <end position="163"/>
    </location>
</feature>
<feature type="region of interest" description="Disordered" evidence="2">
    <location>
        <begin position="140"/>
        <end position="163"/>
    </location>
</feature>
<feature type="compositionally biased region" description="Basic and acidic residues" evidence="2">
    <location>
        <begin position="140"/>
        <end position="157"/>
    </location>
</feature>
<comment type="function">
    <text evidence="1">Required for rescue of stalled ribosomes mediated by trans-translation. Binds to transfer-messenger RNA (tmRNA), required for stable association of tmRNA with ribosomes. tmRNA and SmpB together mimic tRNA shape, replacing the anticodon stem-loop with SmpB. tmRNA is encoded by the ssrA gene; the 2 termini fold to resemble tRNA(Ala) and it encodes a 'tag peptide', a short internal open reading frame. During trans-translation Ala-aminoacylated tmRNA acts like a tRNA, entering the A-site of stalled ribosomes, displacing the stalled mRNA. The ribosome then switches to translate the ORF on the tmRNA; the nascent peptide is terminated with the 'tag peptide' encoded by the tmRNA and targeted for degradation. The ribosome is freed to recommence translation, which seems to be the essential function of trans-translation.</text>
</comment>
<comment type="subcellular location">
    <subcellularLocation>
        <location evidence="1">Cytoplasm</location>
    </subcellularLocation>
    <text evidence="1">The tmRNA-SmpB complex associates with stalled 70S ribosomes.</text>
</comment>
<comment type="similarity">
    <text evidence="1">Belongs to the SmpB family.</text>
</comment>
<keyword id="KW-0963">Cytoplasm</keyword>
<keyword id="KW-1185">Reference proteome</keyword>
<keyword id="KW-0694">RNA-binding</keyword>
<dbReference type="EMBL" id="CP000251">
    <property type="protein sequence ID" value="ABC83446.1"/>
    <property type="molecule type" value="Genomic_DNA"/>
</dbReference>
<dbReference type="RefSeq" id="WP_011422728.1">
    <property type="nucleotide sequence ID" value="NC_007760.1"/>
</dbReference>
<dbReference type="SMR" id="Q2IFT5"/>
<dbReference type="STRING" id="290397.Adeh_3680"/>
<dbReference type="KEGG" id="ade:Adeh_3680"/>
<dbReference type="eggNOG" id="COG0691">
    <property type="taxonomic scope" value="Bacteria"/>
</dbReference>
<dbReference type="HOGENOM" id="CLU_108953_0_1_7"/>
<dbReference type="OrthoDB" id="9805462at2"/>
<dbReference type="Proteomes" id="UP000001935">
    <property type="component" value="Chromosome"/>
</dbReference>
<dbReference type="GO" id="GO:0005829">
    <property type="term" value="C:cytosol"/>
    <property type="evidence" value="ECO:0007669"/>
    <property type="project" value="TreeGrafter"/>
</dbReference>
<dbReference type="GO" id="GO:0003723">
    <property type="term" value="F:RNA binding"/>
    <property type="evidence" value="ECO:0007669"/>
    <property type="project" value="UniProtKB-UniRule"/>
</dbReference>
<dbReference type="GO" id="GO:0070929">
    <property type="term" value="P:trans-translation"/>
    <property type="evidence" value="ECO:0007669"/>
    <property type="project" value="UniProtKB-UniRule"/>
</dbReference>
<dbReference type="CDD" id="cd09294">
    <property type="entry name" value="SmpB"/>
    <property type="match status" value="1"/>
</dbReference>
<dbReference type="Gene3D" id="2.40.280.10">
    <property type="match status" value="1"/>
</dbReference>
<dbReference type="HAMAP" id="MF_00023">
    <property type="entry name" value="SmpB"/>
    <property type="match status" value="1"/>
</dbReference>
<dbReference type="InterPro" id="IPR023620">
    <property type="entry name" value="SmpB"/>
</dbReference>
<dbReference type="InterPro" id="IPR000037">
    <property type="entry name" value="SsrA-bd_prot"/>
</dbReference>
<dbReference type="InterPro" id="IPR020081">
    <property type="entry name" value="SsrA-bd_prot_CS"/>
</dbReference>
<dbReference type="NCBIfam" id="NF003843">
    <property type="entry name" value="PRK05422.1"/>
    <property type="match status" value="1"/>
</dbReference>
<dbReference type="NCBIfam" id="TIGR00086">
    <property type="entry name" value="smpB"/>
    <property type="match status" value="1"/>
</dbReference>
<dbReference type="PANTHER" id="PTHR30308:SF2">
    <property type="entry name" value="SSRA-BINDING PROTEIN"/>
    <property type="match status" value="1"/>
</dbReference>
<dbReference type="PANTHER" id="PTHR30308">
    <property type="entry name" value="TMRNA-BINDING COMPONENT OF TRANS-TRANSLATION TAGGING COMPLEX"/>
    <property type="match status" value="1"/>
</dbReference>
<dbReference type="Pfam" id="PF01668">
    <property type="entry name" value="SmpB"/>
    <property type="match status" value="1"/>
</dbReference>
<dbReference type="SUPFAM" id="SSF74982">
    <property type="entry name" value="Small protein B (SmpB)"/>
    <property type="match status" value="1"/>
</dbReference>
<dbReference type="PROSITE" id="PS01317">
    <property type="entry name" value="SSRP"/>
    <property type="match status" value="1"/>
</dbReference>
<evidence type="ECO:0000255" key="1">
    <source>
        <dbReference type="HAMAP-Rule" id="MF_00023"/>
    </source>
</evidence>
<evidence type="ECO:0000256" key="2">
    <source>
        <dbReference type="SAM" id="MobiDB-lite"/>
    </source>
</evidence>
<reference key="1">
    <citation type="submission" date="2006-01" db="EMBL/GenBank/DDBJ databases">
        <title>Complete sequence of Anaeromyxobacter dehalogenans 2CP-C.</title>
        <authorList>
            <person name="Copeland A."/>
            <person name="Lucas S."/>
            <person name="Lapidus A."/>
            <person name="Barry K."/>
            <person name="Detter J.C."/>
            <person name="Glavina T."/>
            <person name="Hammon N."/>
            <person name="Israni S."/>
            <person name="Pitluck S."/>
            <person name="Brettin T."/>
            <person name="Bruce D."/>
            <person name="Han C."/>
            <person name="Tapia R."/>
            <person name="Gilna P."/>
            <person name="Kiss H."/>
            <person name="Schmutz J."/>
            <person name="Larimer F."/>
            <person name="Land M."/>
            <person name="Kyrpides N."/>
            <person name="Anderson I."/>
            <person name="Sanford R.A."/>
            <person name="Ritalahti K.M."/>
            <person name="Thomas H.S."/>
            <person name="Kirby J.R."/>
            <person name="Zhulin I.B."/>
            <person name="Loeffler F.E."/>
            <person name="Richardson P."/>
        </authorList>
    </citation>
    <scope>NUCLEOTIDE SEQUENCE [LARGE SCALE GENOMIC DNA]</scope>
    <source>
        <strain>2CP-C</strain>
    </source>
</reference>
<organism>
    <name type="scientific">Anaeromyxobacter dehalogenans (strain 2CP-C)</name>
    <dbReference type="NCBI Taxonomy" id="290397"/>
    <lineage>
        <taxon>Bacteria</taxon>
        <taxon>Pseudomonadati</taxon>
        <taxon>Myxococcota</taxon>
        <taxon>Myxococcia</taxon>
        <taxon>Myxococcales</taxon>
        <taxon>Cystobacterineae</taxon>
        <taxon>Anaeromyxobacteraceae</taxon>
        <taxon>Anaeromyxobacter</taxon>
    </lineage>
</organism>
<accession>Q2IFT5</accession>
<gene>
    <name evidence="1" type="primary">smpB</name>
    <name type="ordered locus">Adeh_3680</name>
</gene>
<name>SSRP_ANADE</name>